<organism>
    <name type="scientific">Bacillus velezensis (strain DSM 23117 / BGSC 10A6 / LMG 26770 / FZB42)</name>
    <name type="common">Bacillus amyloliquefaciens subsp. plantarum</name>
    <dbReference type="NCBI Taxonomy" id="326423"/>
    <lineage>
        <taxon>Bacteria</taxon>
        <taxon>Bacillati</taxon>
        <taxon>Bacillota</taxon>
        <taxon>Bacilli</taxon>
        <taxon>Bacillales</taxon>
        <taxon>Bacillaceae</taxon>
        <taxon>Bacillus</taxon>
        <taxon>Bacillus amyloliquefaciens group</taxon>
    </lineage>
</organism>
<dbReference type="EMBL" id="CP000560">
    <property type="protein sequence ID" value="ABS72552.1"/>
    <property type="molecule type" value="Genomic_DNA"/>
</dbReference>
<dbReference type="RefSeq" id="WP_007410396.1">
    <property type="nucleotide sequence ID" value="NC_009725.2"/>
</dbReference>
<dbReference type="SMR" id="A7Z0M6"/>
<dbReference type="GeneID" id="93079268"/>
<dbReference type="KEGG" id="bay:RBAM_001290"/>
<dbReference type="HOGENOM" id="CLU_092227_2_0_9"/>
<dbReference type="Proteomes" id="UP000001120">
    <property type="component" value="Chromosome"/>
</dbReference>
<dbReference type="GO" id="GO:0015934">
    <property type="term" value="C:large ribosomal subunit"/>
    <property type="evidence" value="ECO:0007669"/>
    <property type="project" value="InterPro"/>
</dbReference>
<dbReference type="GO" id="GO:0070180">
    <property type="term" value="F:large ribosomal subunit rRNA binding"/>
    <property type="evidence" value="ECO:0007669"/>
    <property type="project" value="UniProtKB-UniRule"/>
</dbReference>
<dbReference type="GO" id="GO:0003735">
    <property type="term" value="F:structural constituent of ribosome"/>
    <property type="evidence" value="ECO:0007669"/>
    <property type="project" value="InterPro"/>
</dbReference>
<dbReference type="GO" id="GO:0006412">
    <property type="term" value="P:translation"/>
    <property type="evidence" value="ECO:0007669"/>
    <property type="project" value="UniProtKB-UniRule"/>
</dbReference>
<dbReference type="CDD" id="cd05797">
    <property type="entry name" value="Ribosomal_L10"/>
    <property type="match status" value="1"/>
</dbReference>
<dbReference type="FunFam" id="3.30.70.1730:FF:000001">
    <property type="entry name" value="50S ribosomal protein L10"/>
    <property type="match status" value="1"/>
</dbReference>
<dbReference type="Gene3D" id="3.30.70.1730">
    <property type="match status" value="1"/>
</dbReference>
<dbReference type="HAMAP" id="MF_00362">
    <property type="entry name" value="Ribosomal_uL10"/>
    <property type="match status" value="1"/>
</dbReference>
<dbReference type="InterPro" id="IPR001790">
    <property type="entry name" value="Ribosomal_uL10"/>
</dbReference>
<dbReference type="InterPro" id="IPR043141">
    <property type="entry name" value="Ribosomal_uL10-like_sf"/>
</dbReference>
<dbReference type="InterPro" id="IPR022973">
    <property type="entry name" value="Ribosomal_uL10_bac"/>
</dbReference>
<dbReference type="InterPro" id="IPR047865">
    <property type="entry name" value="Ribosomal_uL10_bac_type"/>
</dbReference>
<dbReference type="InterPro" id="IPR002363">
    <property type="entry name" value="Ribosomal_uL10_CS_bac"/>
</dbReference>
<dbReference type="NCBIfam" id="NF000955">
    <property type="entry name" value="PRK00099.1-1"/>
    <property type="match status" value="1"/>
</dbReference>
<dbReference type="PANTHER" id="PTHR11560">
    <property type="entry name" value="39S RIBOSOMAL PROTEIN L10, MITOCHONDRIAL"/>
    <property type="match status" value="1"/>
</dbReference>
<dbReference type="Pfam" id="PF00466">
    <property type="entry name" value="Ribosomal_L10"/>
    <property type="match status" value="1"/>
</dbReference>
<dbReference type="SUPFAM" id="SSF160369">
    <property type="entry name" value="Ribosomal protein L10-like"/>
    <property type="match status" value="1"/>
</dbReference>
<dbReference type="PROSITE" id="PS01109">
    <property type="entry name" value="RIBOSOMAL_L10"/>
    <property type="match status" value="1"/>
</dbReference>
<name>RL10_BACVZ</name>
<protein>
    <recommendedName>
        <fullName evidence="1">Large ribosomal subunit protein uL10</fullName>
    </recommendedName>
    <alternativeName>
        <fullName evidence="2">50S ribosomal protein L10</fullName>
    </alternativeName>
</protein>
<comment type="function">
    <text evidence="1">Forms part of the ribosomal stalk, playing a central role in the interaction of the ribosome with GTP-bound translation factors.</text>
</comment>
<comment type="subunit">
    <text evidence="1">Part of the ribosomal stalk of the 50S ribosomal subunit. The N-terminus interacts with L11 and the large rRNA to form the base of the stalk. The C-terminus forms an elongated spine to which L12 dimers bind in a sequential fashion forming a multimeric L10(L12)X complex.</text>
</comment>
<comment type="similarity">
    <text evidence="1">Belongs to the universal ribosomal protein uL10 family.</text>
</comment>
<reference key="1">
    <citation type="journal article" date="2007" name="Nat. Biotechnol.">
        <title>Comparative analysis of the complete genome sequence of the plant growth-promoting bacterium Bacillus amyloliquefaciens FZB42.</title>
        <authorList>
            <person name="Chen X.H."/>
            <person name="Koumoutsi A."/>
            <person name="Scholz R."/>
            <person name="Eisenreich A."/>
            <person name="Schneider K."/>
            <person name="Heinemeyer I."/>
            <person name="Morgenstern B."/>
            <person name="Voss B."/>
            <person name="Hess W.R."/>
            <person name="Reva O."/>
            <person name="Junge H."/>
            <person name="Voigt B."/>
            <person name="Jungblut P.R."/>
            <person name="Vater J."/>
            <person name="Suessmuth R."/>
            <person name="Liesegang H."/>
            <person name="Strittmatter A."/>
            <person name="Gottschalk G."/>
            <person name="Borriss R."/>
        </authorList>
    </citation>
    <scope>NUCLEOTIDE SEQUENCE [LARGE SCALE GENOMIC DNA]</scope>
    <source>
        <strain>DSM 23117 / BGSC 10A6 / LMG 26770 / FZB42</strain>
    </source>
</reference>
<keyword id="KW-0687">Ribonucleoprotein</keyword>
<keyword id="KW-0689">Ribosomal protein</keyword>
<keyword id="KW-0694">RNA-binding</keyword>
<keyword id="KW-0699">rRNA-binding</keyword>
<evidence type="ECO:0000255" key="1">
    <source>
        <dbReference type="HAMAP-Rule" id="MF_00362"/>
    </source>
</evidence>
<evidence type="ECO:0000305" key="2"/>
<gene>
    <name evidence="1" type="primary">rplJ</name>
    <name type="ordered locus">RBAM_001290</name>
</gene>
<proteinExistence type="inferred from homology"/>
<feature type="chain" id="PRO_1000005468" description="Large ribosomal subunit protein uL10">
    <location>
        <begin position="1"/>
        <end position="166"/>
    </location>
</feature>
<accession>A7Z0M6</accession>
<sequence length="166" mass="18004">MSSAIDTKKVVVEEIASKLKESKSTIIVDYRGLNVSEVTELRKQLREANVEFKVYKNTMTRRAVEQAELDGLNDVLTGPNAIAFSTEDVIAPAKVLNEFAKNHEALEIKAGVIEGKVSSVEEVKALAELPSRDGLLSMLLSVLQAPVRNLALAAKAVADQKEEQGA</sequence>